<accession>Q4QMB1</accession>
<comment type="function">
    <text evidence="1">Binds to 23S rRNA. Forms part of two intersubunit bridges in the 70S ribosome.</text>
</comment>
<comment type="subunit">
    <text evidence="1">Part of the 50S ribosomal subunit. Forms a cluster with proteins L3 and L19. In the 70S ribosome, L14 and L19 interact and together make contacts with the 16S rRNA in bridges B5 and B8.</text>
</comment>
<comment type="similarity">
    <text evidence="1">Belongs to the universal ribosomal protein uL14 family.</text>
</comment>
<dbReference type="EMBL" id="CP000057">
    <property type="protein sequence ID" value="AAX87836.1"/>
    <property type="molecule type" value="Genomic_DNA"/>
</dbReference>
<dbReference type="RefSeq" id="WP_005548786.1">
    <property type="nucleotide sequence ID" value="NC_007146.2"/>
</dbReference>
<dbReference type="SMR" id="Q4QMB1"/>
<dbReference type="GeneID" id="93226847"/>
<dbReference type="KEGG" id="hit:NTHI0951"/>
<dbReference type="HOGENOM" id="CLU_095071_2_1_6"/>
<dbReference type="Proteomes" id="UP000002525">
    <property type="component" value="Chromosome"/>
</dbReference>
<dbReference type="GO" id="GO:0022625">
    <property type="term" value="C:cytosolic large ribosomal subunit"/>
    <property type="evidence" value="ECO:0007669"/>
    <property type="project" value="TreeGrafter"/>
</dbReference>
<dbReference type="GO" id="GO:0070180">
    <property type="term" value="F:large ribosomal subunit rRNA binding"/>
    <property type="evidence" value="ECO:0007669"/>
    <property type="project" value="TreeGrafter"/>
</dbReference>
<dbReference type="GO" id="GO:0003735">
    <property type="term" value="F:structural constituent of ribosome"/>
    <property type="evidence" value="ECO:0007669"/>
    <property type="project" value="InterPro"/>
</dbReference>
<dbReference type="GO" id="GO:0006412">
    <property type="term" value="P:translation"/>
    <property type="evidence" value="ECO:0007669"/>
    <property type="project" value="UniProtKB-UniRule"/>
</dbReference>
<dbReference type="CDD" id="cd00337">
    <property type="entry name" value="Ribosomal_uL14"/>
    <property type="match status" value="1"/>
</dbReference>
<dbReference type="FunFam" id="2.40.150.20:FF:000001">
    <property type="entry name" value="50S ribosomal protein L14"/>
    <property type="match status" value="1"/>
</dbReference>
<dbReference type="Gene3D" id="2.40.150.20">
    <property type="entry name" value="Ribosomal protein L14"/>
    <property type="match status" value="1"/>
</dbReference>
<dbReference type="HAMAP" id="MF_01367">
    <property type="entry name" value="Ribosomal_uL14"/>
    <property type="match status" value="1"/>
</dbReference>
<dbReference type="InterPro" id="IPR000218">
    <property type="entry name" value="Ribosomal_uL14"/>
</dbReference>
<dbReference type="InterPro" id="IPR005745">
    <property type="entry name" value="Ribosomal_uL14_bac-type"/>
</dbReference>
<dbReference type="InterPro" id="IPR019972">
    <property type="entry name" value="Ribosomal_uL14_CS"/>
</dbReference>
<dbReference type="InterPro" id="IPR036853">
    <property type="entry name" value="Ribosomal_uL14_sf"/>
</dbReference>
<dbReference type="NCBIfam" id="TIGR01067">
    <property type="entry name" value="rplN_bact"/>
    <property type="match status" value="1"/>
</dbReference>
<dbReference type="PANTHER" id="PTHR11761">
    <property type="entry name" value="50S/60S RIBOSOMAL PROTEIN L14/L23"/>
    <property type="match status" value="1"/>
</dbReference>
<dbReference type="PANTHER" id="PTHR11761:SF3">
    <property type="entry name" value="LARGE RIBOSOMAL SUBUNIT PROTEIN UL14M"/>
    <property type="match status" value="1"/>
</dbReference>
<dbReference type="Pfam" id="PF00238">
    <property type="entry name" value="Ribosomal_L14"/>
    <property type="match status" value="1"/>
</dbReference>
<dbReference type="SMART" id="SM01374">
    <property type="entry name" value="Ribosomal_L14"/>
    <property type="match status" value="1"/>
</dbReference>
<dbReference type="SUPFAM" id="SSF50193">
    <property type="entry name" value="Ribosomal protein L14"/>
    <property type="match status" value="1"/>
</dbReference>
<dbReference type="PROSITE" id="PS00049">
    <property type="entry name" value="RIBOSOMAL_L14"/>
    <property type="match status" value="1"/>
</dbReference>
<keyword id="KW-0687">Ribonucleoprotein</keyword>
<keyword id="KW-0689">Ribosomal protein</keyword>
<keyword id="KW-0694">RNA-binding</keyword>
<keyword id="KW-0699">rRNA-binding</keyword>
<gene>
    <name evidence="1" type="primary">rplN</name>
    <name type="ordered locus">NTHI0951</name>
</gene>
<name>RL14_HAEI8</name>
<proteinExistence type="inferred from homology"/>
<feature type="chain" id="PRO_0000266493" description="Large ribosomal subunit protein uL14">
    <location>
        <begin position="1"/>
        <end position="123"/>
    </location>
</feature>
<protein>
    <recommendedName>
        <fullName evidence="1">Large ribosomal subunit protein uL14</fullName>
    </recommendedName>
    <alternativeName>
        <fullName evidence="2">50S ribosomal protein L14</fullName>
    </alternativeName>
</protein>
<sequence length="123" mass="13501">MIQEQTMLDVADNSGARSVMCIKVLGGSHRRYAAIGDIIKITVKEAIPRGKVKKGDVLKAVVVRTKKGVRRPDGSVIRFDGNACVILNNNTEQPIGTRIFGPVTRELRSEKFMKIISLAPEVL</sequence>
<evidence type="ECO:0000255" key="1">
    <source>
        <dbReference type="HAMAP-Rule" id="MF_01367"/>
    </source>
</evidence>
<evidence type="ECO:0000305" key="2"/>
<reference key="1">
    <citation type="journal article" date="2005" name="J. Bacteriol.">
        <title>Genomic sequence of an otitis media isolate of nontypeable Haemophilus influenzae: comparative study with H. influenzae serotype d, strain KW20.</title>
        <authorList>
            <person name="Harrison A."/>
            <person name="Dyer D.W."/>
            <person name="Gillaspy A."/>
            <person name="Ray W.C."/>
            <person name="Mungur R."/>
            <person name="Carson M.B."/>
            <person name="Zhong H."/>
            <person name="Gipson J."/>
            <person name="Gipson M."/>
            <person name="Johnson L.S."/>
            <person name="Lewis L."/>
            <person name="Bakaletz L.O."/>
            <person name="Munson R.S. Jr."/>
        </authorList>
    </citation>
    <scope>NUCLEOTIDE SEQUENCE [LARGE SCALE GENOMIC DNA]</scope>
    <source>
        <strain>86-028NP</strain>
    </source>
</reference>
<organism>
    <name type="scientific">Haemophilus influenzae (strain 86-028NP)</name>
    <dbReference type="NCBI Taxonomy" id="281310"/>
    <lineage>
        <taxon>Bacteria</taxon>
        <taxon>Pseudomonadati</taxon>
        <taxon>Pseudomonadota</taxon>
        <taxon>Gammaproteobacteria</taxon>
        <taxon>Pasteurellales</taxon>
        <taxon>Pasteurellaceae</taxon>
        <taxon>Haemophilus</taxon>
    </lineage>
</organism>